<reference key="1">
    <citation type="submission" date="2008-01" db="EMBL/GenBank/DDBJ databases">
        <title>Complete sequence of chromosome of Caulobacter sp. K31.</title>
        <authorList>
            <consortium name="US DOE Joint Genome Institute"/>
            <person name="Copeland A."/>
            <person name="Lucas S."/>
            <person name="Lapidus A."/>
            <person name="Barry K."/>
            <person name="Glavina del Rio T."/>
            <person name="Dalin E."/>
            <person name="Tice H."/>
            <person name="Pitluck S."/>
            <person name="Bruce D."/>
            <person name="Goodwin L."/>
            <person name="Thompson L.S."/>
            <person name="Brettin T."/>
            <person name="Detter J.C."/>
            <person name="Han C."/>
            <person name="Schmutz J."/>
            <person name="Larimer F."/>
            <person name="Land M."/>
            <person name="Hauser L."/>
            <person name="Kyrpides N."/>
            <person name="Kim E."/>
            <person name="Stephens C."/>
            <person name="Richardson P."/>
        </authorList>
    </citation>
    <scope>NUCLEOTIDE SEQUENCE [LARGE SCALE GENOMIC DNA]</scope>
    <source>
        <strain>K31</strain>
    </source>
</reference>
<gene>
    <name evidence="1" type="primary">frr</name>
    <name type="ordered locus">Caul_2802</name>
</gene>
<proteinExistence type="inferred from homology"/>
<accession>B0SZ18</accession>
<evidence type="ECO:0000255" key="1">
    <source>
        <dbReference type="HAMAP-Rule" id="MF_00040"/>
    </source>
</evidence>
<protein>
    <recommendedName>
        <fullName evidence="1">Ribosome-recycling factor</fullName>
        <shortName evidence="1">RRF</shortName>
    </recommendedName>
    <alternativeName>
        <fullName evidence="1">Ribosome-releasing factor</fullName>
    </alternativeName>
</protein>
<keyword id="KW-0963">Cytoplasm</keyword>
<keyword id="KW-0648">Protein biosynthesis</keyword>
<organism>
    <name type="scientific">Caulobacter sp. (strain K31)</name>
    <dbReference type="NCBI Taxonomy" id="366602"/>
    <lineage>
        <taxon>Bacteria</taxon>
        <taxon>Pseudomonadati</taxon>
        <taxon>Pseudomonadota</taxon>
        <taxon>Alphaproteobacteria</taxon>
        <taxon>Caulobacterales</taxon>
        <taxon>Caulobacteraceae</taxon>
        <taxon>Caulobacter</taxon>
    </lineage>
</organism>
<sequence>MATAEKPVLTRYKDRMDKAVLSLKEDFAGLRTGRASSGLLDQIMVNAYGSMVQLNTVASISVPEPRQINVNIWDKGVVSAVEKAIRNSDLGLNPVVEGNNLRIPIPPLTEERRKDLVKIAGKYAEAQKVAVRNIRRDANDDLKKAEKASVISEDELKKMETEVQKITDGAIKQVDEALKTKEQEIMQV</sequence>
<dbReference type="EMBL" id="CP000927">
    <property type="protein sequence ID" value="ABZ71929.1"/>
    <property type="molecule type" value="Genomic_DNA"/>
</dbReference>
<dbReference type="SMR" id="B0SZ18"/>
<dbReference type="STRING" id="366602.Caul_2802"/>
<dbReference type="KEGG" id="cak:Caul_2802"/>
<dbReference type="eggNOG" id="COG0233">
    <property type="taxonomic scope" value="Bacteria"/>
</dbReference>
<dbReference type="HOGENOM" id="CLU_073981_2_0_5"/>
<dbReference type="OrthoDB" id="9804006at2"/>
<dbReference type="GO" id="GO:0005829">
    <property type="term" value="C:cytosol"/>
    <property type="evidence" value="ECO:0007669"/>
    <property type="project" value="GOC"/>
</dbReference>
<dbReference type="GO" id="GO:0043023">
    <property type="term" value="F:ribosomal large subunit binding"/>
    <property type="evidence" value="ECO:0007669"/>
    <property type="project" value="TreeGrafter"/>
</dbReference>
<dbReference type="GO" id="GO:0002184">
    <property type="term" value="P:cytoplasmic translational termination"/>
    <property type="evidence" value="ECO:0007669"/>
    <property type="project" value="TreeGrafter"/>
</dbReference>
<dbReference type="CDD" id="cd00520">
    <property type="entry name" value="RRF"/>
    <property type="match status" value="1"/>
</dbReference>
<dbReference type="FunFam" id="1.10.132.20:FF:000001">
    <property type="entry name" value="Ribosome-recycling factor"/>
    <property type="match status" value="1"/>
</dbReference>
<dbReference type="FunFam" id="3.30.1360.40:FF:000001">
    <property type="entry name" value="Ribosome-recycling factor"/>
    <property type="match status" value="1"/>
</dbReference>
<dbReference type="Gene3D" id="3.30.1360.40">
    <property type="match status" value="1"/>
</dbReference>
<dbReference type="Gene3D" id="1.10.132.20">
    <property type="entry name" value="Ribosome-recycling factor"/>
    <property type="match status" value="1"/>
</dbReference>
<dbReference type="HAMAP" id="MF_00040">
    <property type="entry name" value="RRF"/>
    <property type="match status" value="1"/>
</dbReference>
<dbReference type="InterPro" id="IPR002661">
    <property type="entry name" value="Ribosome_recyc_fac"/>
</dbReference>
<dbReference type="InterPro" id="IPR023584">
    <property type="entry name" value="Ribosome_recyc_fac_dom"/>
</dbReference>
<dbReference type="InterPro" id="IPR036191">
    <property type="entry name" value="RRF_sf"/>
</dbReference>
<dbReference type="NCBIfam" id="TIGR00496">
    <property type="entry name" value="frr"/>
    <property type="match status" value="1"/>
</dbReference>
<dbReference type="PANTHER" id="PTHR20982:SF3">
    <property type="entry name" value="MITOCHONDRIAL RIBOSOME RECYCLING FACTOR PSEUDO 1"/>
    <property type="match status" value="1"/>
</dbReference>
<dbReference type="PANTHER" id="PTHR20982">
    <property type="entry name" value="RIBOSOME RECYCLING FACTOR"/>
    <property type="match status" value="1"/>
</dbReference>
<dbReference type="Pfam" id="PF01765">
    <property type="entry name" value="RRF"/>
    <property type="match status" value="1"/>
</dbReference>
<dbReference type="SUPFAM" id="SSF55194">
    <property type="entry name" value="Ribosome recycling factor, RRF"/>
    <property type="match status" value="1"/>
</dbReference>
<comment type="function">
    <text evidence="1">Responsible for the release of ribosomes from messenger RNA at the termination of protein biosynthesis. May increase the efficiency of translation by recycling ribosomes from one round of translation to another.</text>
</comment>
<comment type="subcellular location">
    <subcellularLocation>
        <location evidence="1">Cytoplasm</location>
    </subcellularLocation>
</comment>
<comment type="similarity">
    <text evidence="1">Belongs to the RRF family.</text>
</comment>
<feature type="chain" id="PRO_1000074573" description="Ribosome-recycling factor">
    <location>
        <begin position="1"/>
        <end position="188"/>
    </location>
</feature>
<name>RRF_CAUSK</name>